<feature type="chain" id="PRO_0000434504" description="Tyrosine-protein kinase csk-1" evidence="8">
    <location>
        <begin position="1"/>
        <end position="539"/>
    </location>
</feature>
<feature type="domain" description="SH3" evidence="4">
    <location>
        <begin position="43"/>
        <end position="110"/>
    </location>
</feature>
<feature type="domain" description="SH2" evidence="3">
    <location>
        <begin position="151"/>
        <end position="241"/>
    </location>
</feature>
<feature type="domain" description="Protein kinase" evidence="2">
    <location>
        <begin position="283"/>
        <end position="535"/>
    </location>
</feature>
<feature type="region of interest" description="Disordered" evidence="5">
    <location>
        <begin position="129"/>
        <end position="148"/>
    </location>
</feature>
<feature type="compositionally biased region" description="Low complexity" evidence="5">
    <location>
        <begin position="131"/>
        <end position="146"/>
    </location>
</feature>
<feature type="active site" description="Proton acceptor" evidence="2">
    <location>
        <position position="403"/>
    </location>
</feature>
<feature type="binding site" evidence="2">
    <location>
        <begin position="289"/>
        <end position="297"/>
    </location>
    <ligand>
        <name>ATP</name>
        <dbReference type="ChEBI" id="CHEBI:30616"/>
    </ligand>
</feature>
<feature type="binding site" evidence="2">
    <location>
        <position position="310"/>
    </location>
    <ligand>
        <name>ATP</name>
        <dbReference type="ChEBI" id="CHEBI:30616"/>
    </ligand>
</feature>
<feature type="splice variant" id="VSP_057936" description="In isoform b." evidence="8">
    <original>M</original>
    <variation>MPIFSASRSRSHHRNSRNPTKFSNFSIEKRSHSLGGSSSSPTSSFSSNDEFDDRQNKNKFWRQRNVSNAEIERIIEDFIANGILKM</variation>
    <location>
        <position position="1"/>
    </location>
</feature>
<feature type="mutagenesis site" description="Loss of kinase activity. Reduction in src-1 and src-2-mediated tyrosine phosphorylation. Mutants arrest at L1 larval stage." evidence="6 7">
    <original>K</original>
    <variation>M</variation>
    <location>
        <position position="310"/>
    </location>
</feature>
<proteinExistence type="evidence at protein level"/>
<dbReference type="EC" id="2.7.10.2" evidence="6"/>
<dbReference type="EMBL" id="AB096875">
    <property type="protein sequence ID" value="BAC76831.1"/>
    <property type="molecule type" value="mRNA"/>
</dbReference>
<dbReference type="EMBL" id="BX284601">
    <property type="protein sequence ID" value="CCD71723.1"/>
    <property type="molecule type" value="Genomic_DNA"/>
</dbReference>
<dbReference type="EMBL" id="BX284601">
    <property type="protein sequence ID" value="CDK13329.1"/>
    <property type="molecule type" value="Genomic_DNA"/>
</dbReference>
<dbReference type="RefSeq" id="NP_001021778.1">
    <property type="nucleotide sequence ID" value="NM_001026607.2"/>
</dbReference>
<dbReference type="RefSeq" id="NP_001293162.1">
    <molecule id="G5ECJ6-2"/>
    <property type="nucleotide sequence ID" value="NM_001306233.3"/>
</dbReference>
<dbReference type="RefSeq" id="NP_001379977.1">
    <molecule id="G5ECJ6-1"/>
    <property type="nucleotide sequence ID" value="NM_001392355.1"/>
</dbReference>
<dbReference type="SMR" id="G5ECJ6"/>
<dbReference type="FunCoup" id="G5ECJ6">
    <property type="interactions" value="982"/>
</dbReference>
<dbReference type="STRING" id="6239.Y48G1C.2b.1"/>
<dbReference type="PaxDb" id="6239-Y48G1C.2.2"/>
<dbReference type="PeptideAtlas" id="G5ECJ6"/>
<dbReference type="EnsemblMetazoa" id="Y48G1C.2a.1">
    <molecule id="G5ECJ6-1"/>
    <property type="protein sequence ID" value="Y48G1C.2a.1"/>
    <property type="gene ID" value="WBGene00000812"/>
</dbReference>
<dbReference type="EnsemblMetazoa" id="Y48G1C.2a.2">
    <molecule id="G5ECJ6-1"/>
    <property type="protein sequence ID" value="Y48G1C.2a.2"/>
    <property type="gene ID" value="WBGene00000812"/>
</dbReference>
<dbReference type="EnsemblMetazoa" id="Y48G1C.2a.3">
    <molecule id="G5ECJ6-1"/>
    <property type="protein sequence ID" value="Y48G1C.2a.3"/>
    <property type="gene ID" value="WBGene00000812"/>
</dbReference>
<dbReference type="EnsemblMetazoa" id="Y48G1C.2b.1">
    <molecule id="G5ECJ6-2"/>
    <property type="protein sequence ID" value="Y48G1C.2b.1"/>
    <property type="gene ID" value="WBGene00000812"/>
</dbReference>
<dbReference type="GeneID" id="266817"/>
<dbReference type="KEGG" id="cel:CELE_Y48G1C.2"/>
<dbReference type="AGR" id="WB:WBGene00000812"/>
<dbReference type="CTD" id="266817"/>
<dbReference type="WormBase" id="Y48G1C.2a">
    <molecule id="G5ECJ6-1"/>
    <property type="protein sequence ID" value="CE34405"/>
    <property type="gene ID" value="WBGene00000812"/>
    <property type="gene designation" value="csk-1"/>
</dbReference>
<dbReference type="WormBase" id="Y48G1C.2b">
    <molecule id="G5ECJ6-2"/>
    <property type="protein sequence ID" value="CE49183"/>
    <property type="gene ID" value="WBGene00000812"/>
    <property type="gene designation" value="csk-1"/>
</dbReference>
<dbReference type="eggNOG" id="KOG0197">
    <property type="taxonomic scope" value="Eukaryota"/>
</dbReference>
<dbReference type="HOGENOM" id="CLU_000288_7_2_1"/>
<dbReference type="InParanoid" id="G5ECJ6"/>
<dbReference type="OMA" id="RMQPPDD"/>
<dbReference type="OrthoDB" id="346907at2759"/>
<dbReference type="PhylomeDB" id="G5ECJ6"/>
<dbReference type="Reactome" id="R-CEL-354192">
    <property type="pathway name" value="Integrin signaling"/>
</dbReference>
<dbReference type="Reactome" id="R-CEL-5674135">
    <property type="pathway name" value="MAP2K and MAPK activation"/>
</dbReference>
<dbReference type="Reactome" id="R-CEL-8863795">
    <property type="pathway name" value="Downregulation of ERBB2 signaling"/>
</dbReference>
<dbReference type="Reactome" id="R-CEL-9013407">
    <property type="pathway name" value="RHOH GTPase cycle"/>
</dbReference>
<dbReference type="PRO" id="PR:G5ECJ6"/>
<dbReference type="Proteomes" id="UP000001940">
    <property type="component" value="Chromosome I"/>
</dbReference>
<dbReference type="Bgee" id="WBGene00000812">
    <property type="expression patterns" value="Expressed in pharyngeal muscle cell (C elegans) and 4 other cell types or tissues"/>
</dbReference>
<dbReference type="ExpressionAtlas" id="G5ECJ6">
    <property type="expression patterns" value="baseline and differential"/>
</dbReference>
<dbReference type="GO" id="GO:0005911">
    <property type="term" value="C:cell-cell junction"/>
    <property type="evidence" value="ECO:0000314"/>
    <property type="project" value="WormBase"/>
</dbReference>
<dbReference type="GO" id="GO:0005886">
    <property type="term" value="C:plasma membrane"/>
    <property type="evidence" value="ECO:0000314"/>
    <property type="project" value="WormBase"/>
</dbReference>
<dbReference type="GO" id="GO:0005524">
    <property type="term" value="F:ATP binding"/>
    <property type="evidence" value="ECO:0007669"/>
    <property type="project" value="UniProtKB-KW"/>
</dbReference>
<dbReference type="GO" id="GO:0046872">
    <property type="term" value="F:metal ion binding"/>
    <property type="evidence" value="ECO:0007669"/>
    <property type="project" value="UniProtKB-KW"/>
</dbReference>
<dbReference type="GO" id="GO:0004715">
    <property type="term" value="F:non-membrane spanning protein tyrosine kinase activity"/>
    <property type="evidence" value="ECO:0000318"/>
    <property type="project" value="GO_Central"/>
</dbReference>
<dbReference type="GO" id="GO:0004713">
    <property type="term" value="F:protein tyrosine kinase activity"/>
    <property type="evidence" value="ECO:0000315"/>
    <property type="project" value="UniProtKB"/>
</dbReference>
<dbReference type="GO" id="GO:0009792">
    <property type="term" value="P:embryo development ending in birth or egg hatching"/>
    <property type="evidence" value="ECO:0000315"/>
    <property type="project" value="WormBase"/>
</dbReference>
<dbReference type="GO" id="GO:0030536">
    <property type="term" value="P:larval feeding behavior"/>
    <property type="evidence" value="ECO:0000315"/>
    <property type="project" value="WormBase"/>
</dbReference>
<dbReference type="GO" id="GO:0055001">
    <property type="term" value="P:muscle cell development"/>
    <property type="evidence" value="ECO:0000315"/>
    <property type="project" value="WormBase"/>
</dbReference>
<dbReference type="GO" id="GO:0002119">
    <property type="term" value="P:nematode larval development"/>
    <property type="evidence" value="ECO:0000315"/>
    <property type="project" value="WormBase"/>
</dbReference>
<dbReference type="GO" id="GO:0043050">
    <property type="term" value="P:nematode pharyngeal pumping"/>
    <property type="evidence" value="ECO:0000315"/>
    <property type="project" value="WormBase"/>
</dbReference>
<dbReference type="CDD" id="cd05039">
    <property type="entry name" value="PTKc_Csk_like"/>
    <property type="match status" value="1"/>
</dbReference>
<dbReference type="CDD" id="cd09937">
    <property type="entry name" value="SH2_csk_like"/>
    <property type="match status" value="1"/>
</dbReference>
<dbReference type="FunFam" id="1.10.510.10:FF:000376">
    <property type="entry name" value="Tyrosine-protein kinase"/>
    <property type="match status" value="1"/>
</dbReference>
<dbReference type="FunFam" id="3.30.505.10:FF:000132">
    <property type="entry name" value="Tyrosine-protein kinase"/>
    <property type="match status" value="1"/>
</dbReference>
<dbReference type="Gene3D" id="3.30.505.10">
    <property type="entry name" value="SH2 domain"/>
    <property type="match status" value="1"/>
</dbReference>
<dbReference type="Gene3D" id="2.30.30.40">
    <property type="entry name" value="SH3 Domains"/>
    <property type="match status" value="1"/>
</dbReference>
<dbReference type="Gene3D" id="1.10.510.10">
    <property type="entry name" value="Transferase(Phosphotransferase) domain 1"/>
    <property type="match status" value="1"/>
</dbReference>
<dbReference type="InterPro" id="IPR035027">
    <property type="entry name" value="Csk-like_SH2"/>
</dbReference>
<dbReference type="InterPro" id="IPR011009">
    <property type="entry name" value="Kinase-like_dom_sf"/>
</dbReference>
<dbReference type="InterPro" id="IPR050198">
    <property type="entry name" value="Non-receptor_tyrosine_kinases"/>
</dbReference>
<dbReference type="InterPro" id="IPR000719">
    <property type="entry name" value="Prot_kinase_dom"/>
</dbReference>
<dbReference type="InterPro" id="IPR017441">
    <property type="entry name" value="Protein_kinase_ATP_BS"/>
</dbReference>
<dbReference type="InterPro" id="IPR001245">
    <property type="entry name" value="Ser-Thr/Tyr_kinase_cat_dom"/>
</dbReference>
<dbReference type="InterPro" id="IPR000980">
    <property type="entry name" value="SH2"/>
</dbReference>
<dbReference type="InterPro" id="IPR036860">
    <property type="entry name" value="SH2_dom_sf"/>
</dbReference>
<dbReference type="InterPro" id="IPR001452">
    <property type="entry name" value="SH3_domain"/>
</dbReference>
<dbReference type="InterPro" id="IPR008266">
    <property type="entry name" value="Tyr_kinase_AS"/>
</dbReference>
<dbReference type="InterPro" id="IPR020635">
    <property type="entry name" value="Tyr_kinase_cat_dom"/>
</dbReference>
<dbReference type="PANTHER" id="PTHR24418">
    <property type="entry name" value="TYROSINE-PROTEIN KINASE"/>
    <property type="match status" value="1"/>
</dbReference>
<dbReference type="Pfam" id="PF07714">
    <property type="entry name" value="PK_Tyr_Ser-Thr"/>
    <property type="match status" value="1"/>
</dbReference>
<dbReference type="Pfam" id="PF00017">
    <property type="entry name" value="SH2"/>
    <property type="match status" value="1"/>
</dbReference>
<dbReference type="PRINTS" id="PR00678">
    <property type="entry name" value="PI3KINASEP85"/>
</dbReference>
<dbReference type="PRINTS" id="PR00401">
    <property type="entry name" value="SH2DOMAIN"/>
</dbReference>
<dbReference type="PRINTS" id="PR00109">
    <property type="entry name" value="TYRKINASE"/>
</dbReference>
<dbReference type="SMART" id="SM00252">
    <property type="entry name" value="SH2"/>
    <property type="match status" value="1"/>
</dbReference>
<dbReference type="SMART" id="SM00219">
    <property type="entry name" value="TyrKc"/>
    <property type="match status" value="1"/>
</dbReference>
<dbReference type="SUPFAM" id="SSF56112">
    <property type="entry name" value="Protein kinase-like (PK-like)"/>
    <property type="match status" value="1"/>
</dbReference>
<dbReference type="SUPFAM" id="SSF55550">
    <property type="entry name" value="SH2 domain"/>
    <property type="match status" value="1"/>
</dbReference>
<dbReference type="PROSITE" id="PS00107">
    <property type="entry name" value="PROTEIN_KINASE_ATP"/>
    <property type="match status" value="1"/>
</dbReference>
<dbReference type="PROSITE" id="PS50011">
    <property type="entry name" value="PROTEIN_KINASE_DOM"/>
    <property type="match status" value="1"/>
</dbReference>
<dbReference type="PROSITE" id="PS00109">
    <property type="entry name" value="PROTEIN_KINASE_TYR"/>
    <property type="match status" value="1"/>
</dbReference>
<dbReference type="PROSITE" id="PS50001">
    <property type="entry name" value="SH2"/>
    <property type="match status" value="1"/>
</dbReference>
<dbReference type="PROSITE" id="PS50002">
    <property type="entry name" value="SH3"/>
    <property type="match status" value="1"/>
</dbReference>
<evidence type="ECO:0000250" key="1">
    <source>
        <dbReference type="UniProtKB" id="P41240"/>
    </source>
</evidence>
<evidence type="ECO:0000255" key="2">
    <source>
        <dbReference type="PROSITE-ProRule" id="PRU00159"/>
    </source>
</evidence>
<evidence type="ECO:0000255" key="3">
    <source>
        <dbReference type="PROSITE-ProRule" id="PRU00191"/>
    </source>
</evidence>
<evidence type="ECO:0000255" key="4">
    <source>
        <dbReference type="PROSITE-ProRule" id="PRU00192"/>
    </source>
</evidence>
<evidence type="ECO:0000256" key="5">
    <source>
        <dbReference type="SAM" id="MobiDB-lite"/>
    </source>
</evidence>
<evidence type="ECO:0000269" key="6">
    <source>
    </source>
</evidence>
<evidence type="ECO:0000269" key="7">
    <source>
    </source>
</evidence>
<evidence type="ECO:0000305" key="8"/>
<evidence type="ECO:0000312" key="9">
    <source>
        <dbReference type="EMBL" id="BAC76831.1"/>
    </source>
</evidence>
<evidence type="ECO:0000312" key="10">
    <source>
        <dbReference type="Proteomes" id="UP000001940"/>
    </source>
</evidence>
<evidence type="ECO:0000312" key="11">
    <source>
        <dbReference type="WormBase" id="Y48G1C.2a"/>
    </source>
</evidence>
<evidence type="ECO:0000312" key="12">
    <source>
        <dbReference type="WormBase" id="Y48G1C.2b"/>
    </source>
</evidence>
<keyword id="KW-0025">Alternative splicing</keyword>
<keyword id="KW-0067">ATP-binding</keyword>
<keyword id="KW-0418">Kinase</keyword>
<keyword id="KW-0460">Magnesium</keyword>
<keyword id="KW-0464">Manganese</keyword>
<keyword id="KW-0479">Metal-binding</keyword>
<keyword id="KW-0547">Nucleotide-binding</keyword>
<keyword id="KW-1185">Reference proteome</keyword>
<keyword id="KW-0727">SH2 domain</keyword>
<keyword id="KW-0728">SH3 domain</keyword>
<keyword id="KW-0808">Transferase</keyword>
<keyword id="KW-0829">Tyrosine-protein kinase</keyword>
<protein>
    <recommendedName>
        <fullName evidence="8">Tyrosine-protein kinase csk-1</fullName>
        <ecNumber evidence="6">2.7.10.2</ecNumber>
    </recommendedName>
    <alternativeName>
        <fullName evidence="8">C-terminal src kinase</fullName>
    </alternativeName>
</protein>
<reference evidence="9" key="1">
    <citation type="journal article" date="2003" name="FEBS Lett.">
        <title>Distinct roles of the Src family kinases, SRC-1 and KIN-22, that are negatively regulated by CSK-1 in C. elegans.</title>
        <authorList>
            <person name="Hirose T."/>
            <person name="Koga M."/>
            <person name="Ohshima Y."/>
            <person name="Okada M."/>
        </authorList>
    </citation>
    <scope>NUCLEOTIDE SEQUENCE [MRNA]</scope>
    <scope>FUNCTION</scope>
    <scope>CATALYTIC ACTIVITY</scope>
    <scope>TISSUE SPECIFICITY</scope>
    <scope>MUTAGENESIS OF LYS-310</scope>
</reference>
<reference evidence="10" key="2">
    <citation type="journal article" date="1998" name="Science">
        <title>Genome sequence of the nematode C. elegans: a platform for investigating biology.</title>
        <authorList>
            <consortium name="The C. elegans sequencing consortium"/>
        </authorList>
    </citation>
    <scope>NUCLEOTIDE SEQUENCE [LARGE SCALE GENOMIC DNA]</scope>
    <source>
        <strain evidence="10">Bristol N2</strain>
    </source>
</reference>
<reference evidence="8" key="3">
    <citation type="journal article" date="2009" name="Genes Cells">
        <title>Non-receptor tyrosine kinase CSK-1 controls pharyngeal muscle organization in Caenorhabditis elegans.</title>
        <authorList>
            <person name="Takata N."/>
            <person name="Itoh B."/>
            <person name="Misaki K."/>
            <person name="Hirose T."/>
            <person name="Yonemura S."/>
            <person name="Okada M."/>
        </authorList>
    </citation>
    <scope>FUNCTION</scope>
    <scope>TISSUE SPECIFICITY</scope>
    <scope>DEVELOPMENTAL STAGE</scope>
    <scope>MUTAGENESIS OF LYS-310</scope>
</reference>
<name>CSK1_CAEEL</name>
<organism evidence="10">
    <name type="scientific">Caenorhabditis elegans</name>
    <dbReference type="NCBI Taxonomy" id="6239"/>
    <lineage>
        <taxon>Eukaryota</taxon>
        <taxon>Metazoa</taxon>
        <taxon>Ecdysozoa</taxon>
        <taxon>Nematoda</taxon>
        <taxon>Chromadorea</taxon>
        <taxon>Rhabditida</taxon>
        <taxon>Rhabditina</taxon>
        <taxon>Rhabditomorpha</taxon>
        <taxon>Rhabditoidea</taxon>
        <taxon>Rhabditidae</taxon>
        <taxon>Peloderinae</taxon>
        <taxon>Caenorhabditis</taxon>
    </lineage>
</organism>
<sequence>MSNGNSYNHHHQFPMSIPISCSSHSIQSQSRMNTLNANRDLLSPGNDVIVTRTVSPSFYSHGMPARDNVFRKDDHVRILGNTTDPAWYRARNANQEEGLVHADCVVRINGQAYDNGIVRMRASGCDVAPGAASTTSSTSSHHSTAANHQPWFHSMISRENTEKLLRGKPDGTFLVRESTNFPGDFTLCMSFHGKVEHYRIEQTSGGQLTCDKEEYFSNLTQLVSHYKRDADGLCHRLVTPIICETATFSSNGSSSFGSSSTVDLEDRTSVFRHAGLVISSNDIDVGDTIGHGEFGDVRLGTYKNRKVALKVSKRHGNGMLDSLLDEAKFMVGLSHPNLVTLVGVVLDDVNVYMITEYMANGNLIDLLRSRGRHALERRQLMMFAMDICQGMCYLESKQIVHRDLAARNVLLDDDLVAKVSDFGLAKKANSQSHDSASGKFPIKWTAPEALRHSQFTTKSDVWSFGILLWEIFSFGRVPYPRIPIQDVVRYIEKGYRMEAPEGCPPEIFKVMNETWALSAQDRPSFGQVLQRLTTIRNTV</sequence>
<gene>
    <name evidence="11" type="primary">csk-1</name>
    <name evidence="11" type="ORF">Y48G1C.2</name>
</gene>
<comment type="function">
    <text evidence="6 7">Non-receptor tyrosine-protein kinase which plays a role in pharynx function by regulating pumping and the orientation of pharyngeal muscle fibers, independently of src-1 and src-2 (PubMed:19210548). May phosphorylate and thereby negatively regulate src-1 and src-2 activities (PubMed:12527374).</text>
</comment>
<comment type="catalytic activity">
    <reaction evidence="6">
        <text>L-tyrosyl-[protein] + ATP = O-phospho-L-tyrosyl-[protein] + ADP + H(+)</text>
        <dbReference type="Rhea" id="RHEA:10596"/>
        <dbReference type="Rhea" id="RHEA-COMP:10136"/>
        <dbReference type="Rhea" id="RHEA-COMP:20101"/>
        <dbReference type="ChEBI" id="CHEBI:15378"/>
        <dbReference type="ChEBI" id="CHEBI:30616"/>
        <dbReference type="ChEBI" id="CHEBI:46858"/>
        <dbReference type="ChEBI" id="CHEBI:61978"/>
        <dbReference type="ChEBI" id="CHEBI:456216"/>
        <dbReference type="EC" id="2.7.10.2"/>
    </reaction>
</comment>
<comment type="cofactor">
    <cofactor evidence="1">
        <name>Mg(2+)</name>
        <dbReference type="ChEBI" id="CHEBI:18420"/>
    </cofactor>
    <cofactor evidence="1">
        <name>Mn(2+)</name>
        <dbReference type="ChEBI" id="CHEBI:29035"/>
    </cofactor>
</comment>
<comment type="alternative products">
    <event type="alternative splicing"/>
    <isoform>
        <id>G5ECJ6-1</id>
        <name evidence="11">a</name>
        <sequence type="displayed"/>
    </isoform>
    <isoform>
        <id>G5ECJ6-2</id>
        <name evidence="12">b</name>
        <sequence type="described" ref="VSP_057936"/>
    </isoform>
</comment>
<comment type="tissue specificity">
    <text evidence="6 7">Expressed predominantly in pharyngeal muscles in procorpus, metacorpus and terminal bulb (PubMed:12527374, PubMed:19210548). Expressed also in some neurons (ASE, ADF, AVA, AUA, RMDV and BAG) in the head region, anchor cell, vulva, cells around anus, body wall muscle and gondal distal tip cells (PubMed:12527374).</text>
</comment>
<comment type="developmental stage">
    <text evidence="7">Expressed mainly in the pharynx in the loop stage embryo. At L1 larval stage, predominantly expressed in the pharynx with some expression in body wall muscle, anchor cells and tail region.</text>
</comment>
<comment type="similarity">
    <text evidence="8">Belongs to the protein kinase superfamily. Tyr protein kinase family. CSK subfamily.</text>
</comment>
<accession>G5ECJ6</accession>
<accession>V6CL92</accession>